<comment type="catalytic activity">
    <reaction evidence="1">
        <text>tRNA(Gln) + L-glutamine + ATP = L-glutaminyl-tRNA(Gln) + AMP + diphosphate</text>
        <dbReference type="Rhea" id="RHEA:20121"/>
        <dbReference type="Rhea" id="RHEA-COMP:9662"/>
        <dbReference type="Rhea" id="RHEA-COMP:9681"/>
        <dbReference type="ChEBI" id="CHEBI:30616"/>
        <dbReference type="ChEBI" id="CHEBI:33019"/>
        <dbReference type="ChEBI" id="CHEBI:58359"/>
        <dbReference type="ChEBI" id="CHEBI:78442"/>
        <dbReference type="ChEBI" id="CHEBI:78521"/>
        <dbReference type="ChEBI" id="CHEBI:456215"/>
        <dbReference type="EC" id="6.1.1.18"/>
    </reaction>
</comment>
<comment type="subunit">
    <text evidence="1">Monomer.</text>
</comment>
<comment type="subcellular location">
    <subcellularLocation>
        <location evidence="1">Cytoplasm</location>
    </subcellularLocation>
</comment>
<comment type="similarity">
    <text evidence="1">Belongs to the class-I aminoacyl-tRNA synthetase family.</text>
</comment>
<accession>A6VP11</accession>
<protein>
    <recommendedName>
        <fullName evidence="1">Glutamine--tRNA ligase</fullName>
        <ecNumber evidence="1">6.1.1.18</ecNumber>
    </recommendedName>
    <alternativeName>
        <fullName evidence="1">Glutaminyl-tRNA synthetase</fullName>
        <shortName evidence="1">GlnRS</shortName>
    </alternativeName>
</protein>
<feature type="chain" id="PRO_1000095475" description="Glutamine--tRNA ligase">
    <location>
        <begin position="1"/>
        <end position="559"/>
    </location>
</feature>
<feature type="short sequence motif" description="'HIGH' region" evidence="1">
    <location>
        <begin position="44"/>
        <end position="54"/>
    </location>
</feature>
<feature type="short sequence motif" description="'KMSKS' region" evidence="1">
    <location>
        <begin position="279"/>
        <end position="283"/>
    </location>
</feature>
<feature type="binding site" evidence="1">
    <location>
        <begin position="45"/>
        <end position="47"/>
    </location>
    <ligand>
        <name>ATP</name>
        <dbReference type="ChEBI" id="CHEBI:30616"/>
    </ligand>
</feature>
<feature type="binding site" evidence="1">
    <location>
        <begin position="51"/>
        <end position="57"/>
    </location>
    <ligand>
        <name>ATP</name>
        <dbReference type="ChEBI" id="CHEBI:30616"/>
    </ligand>
</feature>
<feature type="binding site" evidence="1">
    <location>
        <position position="77"/>
    </location>
    <ligand>
        <name>L-glutamine</name>
        <dbReference type="ChEBI" id="CHEBI:58359"/>
    </ligand>
</feature>
<feature type="binding site" evidence="1">
    <location>
        <position position="222"/>
    </location>
    <ligand>
        <name>L-glutamine</name>
        <dbReference type="ChEBI" id="CHEBI:58359"/>
    </ligand>
</feature>
<feature type="binding site" evidence="1">
    <location>
        <position position="241"/>
    </location>
    <ligand>
        <name>ATP</name>
        <dbReference type="ChEBI" id="CHEBI:30616"/>
    </ligand>
</feature>
<feature type="binding site" evidence="1">
    <location>
        <begin position="272"/>
        <end position="273"/>
    </location>
    <ligand>
        <name>ATP</name>
        <dbReference type="ChEBI" id="CHEBI:30616"/>
    </ligand>
</feature>
<sequence>MATANIELQSAAEHEAHPTNFIRQIIDEDLATGKHHNVYTRFPPEPNGYLHIGHAKSICLNFGIAQDYHGKCNLRFDDTNPVKEDVEYVDSIKQDVEWLGFNWEGEPRYASDYFDQLYGYAVELIEKGLAYVDELSPEEMREYRGTLTEAGKNSPYRERSVAENLALFEKMRNGEFAEGKACLRAKIDMASPFMVMRDPVIYRVKFASHHQTGDKWCIYPMYDFTHCISDAIERITHSLCTLEFQDNRRLYDWVLEHISIERPLPHQYEFSRLNLEGTLTSKRKLLKLVEEGAVDGWDDPRMPTISGLRRRGYTPASLREFCRRIGVTKQDNVVEFSALESCIRDDLNINAPRAMAVINPLKVIIENFETPETLTMPNHPNREEMGTRQVQLTKELYIDQADFREEANKQYKRLVLGKEVRLRNAYIIKAERVEKDAEGNIVCVYCSYDPETLGKNPSDGRKVKGVIQWVSATDCLPAEFRQYSRLFTMPNPGSEEDIIAAINPQSLVVRQGFVERSVANALSEKAYQFEREGYYCADSKDSRPDHLVFNLTVSLKEGF</sequence>
<evidence type="ECO:0000255" key="1">
    <source>
        <dbReference type="HAMAP-Rule" id="MF_00126"/>
    </source>
</evidence>
<gene>
    <name evidence="1" type="primary">glnS</name>
    <name type="ordered locus">Asuc_1348</name>
</gene>
<keyword id="KW-0030">Aminoacyl-tRNA synthetase</keyword>
<keyword id="KW-0067">ATP-binding</keyword>
<keyword id="KW-0963">Cytoplasm</keyword>
<keyword id="KW-0436">Ligase</keyword>
<keyword id="KW-0547">Nucleotide-binding</keyword>
<keyword id="KW-0648">Protein biosynthesis</keyword>
<keyword id="KW-1185">Reference proteome</keyword>
<organism>
    <name type="scientific">Actinobacillus succinogenes (strain ATCC 55618 / DSM 22257 / CCUG 43843 / 130Z)</name>
    <dbReference type="NCBI Taxonomy" id="339671"/>
    <lineage>
        <taxon>Bacteria</taxon>
        <taxon>Pseudomonadati</taxon>
        <taxon>Pseudomonadota</taxon>
        <taxon>Gammaproteobacteria</taxon>
        <taxon>Pasteurellales</taxon>
        <taxon>Pasteurellaceae</taxon>
        <taxon>Actinobacillus</taxon>
    </lineage>
</organism>
<dbReference type="EC" id="6.1.1.18" evidence="1"/>
<dbReference type="EMBL" id="CP000746">
    <property type="protein sequence ID" value="ABR74708.1"/>
    <property type="molecule type" value="Genomic_DNA"/>
</dbReference>
<dbReference type="RefSeq" id="WP_012073085.1">
    <property type="nucleotide sequence ID" value="NC_009655.1"/>
</dbReference>
<dbReference type="SMR" id="A6VP11"/>
<dbReference type="STRING" id="339671.Asuc_1348"/>
<dbReference type="KEGG" id="asu:Asuc_1348"/>
<dbReference type="eggNOG" id="COG0008">
    <property type="taxonomic scope" value="Bacteria"/>
</dbReference>
<dbReference type="HOGENOM" id="CLU_001882_2_3_6"/>
<dbReference type="OrthoDB" id="9801560at2"/>
<dbReference type="Proteomes" id="UP000001114">
    <property type="component" value="Chromosome"/>
</dbReference>
<dbReference type="GO" id="GO:0005829">
    <property type="term" value="C:cytosol"/>
    <property type="evidence" value="ECO:0007669"/>
    <property type="project" value="TreeGrafter"/>
</dbReference>
<dbReference type="GO" id="GO:0005524">
    <property type="term" value="F:ATP binding"/>
    <property type="evidence" value="ECO:0007669"/>
    <property type="project" value="UniProtKB-UniRule"/>
</dbReference>
<dbReference type="GO" id="GO:0004819">
    <property type="term" value="F:glutamine-tRNA ligase activity"/>
    <property type="evidence" value="ECO:0007669"/>
    <property type="project" value="UniProtKB-UniRule"/>
</dbReference>
<dbReference type="GO" id="GO:0006425">
    <property type="term" value="P:glutaminyl-tRNA aminoacylation"/>
    <property type="evidence" value="ECO:0007669"/>
    <property type="project" value="InterPro"/>
</dbReference>
<dbReference type="GO" id="GO:0006424">
    <property type="term" value="P:glutamyl-tRNA aminoacylation"/>
    <property type="evidence" value="ECO:0007669"/>
    <property type="project" value="UniProtKB-UniRule"/>
</dbReference>
<dbReference type="CDD" id="cd00807">
    <property type="entry name" value="GlnRS_core"/>
    <property type="match status" value="1"/>
</dbReference>
<dbReference type="FunFam" id="1.10.1160.10:FF:000001">
    <property type="entry name" value="Glutamine--tRNA ligase"/>
    <property type="match status" value="1"/>
</dbReference>
<dbReference type="FunFam" id="2.40.240.10:FF:000001">
    <property type="entry name" value="Glutamine--tRNA ligase"/>
    <property type="match status" value="1"/>
</dbReference>
<dbReference type="FunFam" id="3.90.800.10:FF:000001">
    <property type="entry name" value="Glutamine--tRNA ligase"/>
    <property type="match status" value="1"/>
</dbReference>
<dbReference type="FunFam" id="3.40.50.620:FF:000037">
    <property type="entry name" value="Glutamine--tRNA ligase cytoplasmic"/>
    <property type="match status" value="1"/>
</dbReference>
<dbReference type="Gene3D" id="1.10.1160.10">
    <property type="entry name" value="Glutamyl-trna Synthetase, Domain 2"/>
    <property type="match status" value="1"/>
</dbReference>
<dbReference type="Gene3D" id="3.90.800.10">
    <property type="entry name" value="Glutamyl-tRNA Synthetase, Domain 3"/>
    <property type="match status" value="1"/>
</dbReference>
<dbReference type="Gene3D" id="3.40.50.620">
    <property type="entry name" value="HUPs"/>
    <property type="match status" value="1"/>
</dbReference>
<dbReference type="Gene3D" id="2.40.240.10">
    <property type="entry name" value="Ribosomal Protein L25, Chain P"/>
    <property type="match status" value="2"/>
</dbReference>
<dbReference type="HAMAP" id="MF_00126">
    <property type="entry name" value="Gln_tRNA_synth"/>
    <property type="match status" value="1"/>
</dbReference>
<dbReference type="InterPro" id="IPR001412">
    <property type="entry name" value="aa-tRNA-synth_I_CS"/>
</dbReference>
<dbReference type="InterPro" id="IPR004514">
    <property type="entry name" value="Gln-tRNA-synth"/>
</dbReference>
<dbReference type="InterPro" id="IPR050132">
    <property type="entry name" value="Gln/Glu-tRNA_Ligase"/>
</dbReference>
<dbReference type="InterPro" id="IPR022861">
    <property type="entry name" value="Gln_tRNA_ligase_bac"/>
</dbReference>
<dbReference type="InterPro" id="IPR000924">
    <property type="entry name" value="Glu/Gln-tRNA-synth"/>
</dbReference>
<dbReference type="InterPro" id="IPR020058">
    <property type="entry name" value="Glu/Gln-tRNA-synth_Ib_cat-dom"/>
</dbReference>
<dbReference type="InterPro" id="IPR020059">
    <property type="entry name" value="Glu/Gln-tRNA-synth_Ib_codon-bd"/>
</dbReference>
<dbReference type="InterPro" id="IPR020061">
    <property type="entry name" value="Glu_tRNA_lig_a-bdl"/>
</dbReference>
<dbReference type="InterPro" id="IPR020056">
    <property type="entry name" value="Rbsml_bL25/Gln-tRNA_synth_N"/>
</dbReference>
<dbReference type="InterPro" id="IPR011035">
    <property type="entry name" value="Ribosomal_bL25/Gln-tRNA_synth"/>
</dbReference>
<dbReference type="InterPro" id="IPR014729">
    <property type="entry name" value="Rossmann-like_a/b/a_fold"/>
</dbReference>
<dbReference type="InterPro" id="IPR049437">
    <property type="entry name" value="tRNA-synt_1c_C2"/>
</dbReference>
<dbReference type="NCBIfam" id="TIGR00440">
    <property type="entry name" value="glnS"/>
    <property type="match status" value="1"/>
</dbReference>
<dbReference type="NCBIfam" id="NF011291">
    <property type="entry name" value="PRK14703.1"/>
    <property type="match status" value="1"/>
</dbReference>
<dbReference type="PANTHER" id="PTHR43097:SF5">
    <property type="entry name" value="GLUTAMATE--TRNA LIGASE"/>
    <property type="match status" value="1"/>
</dbReference>
<dbReference type="PANTHER" id="PTHR43097">
    <property type="entry name" value="GLUTAMINE-TRNA LIGASE"/>
    <property type="match status" value="1"/>
</dbReference>
<dbReference type="Pfam" id="PF00749">
    <property type="entry name" value="tRNA-synt_1c"/>
    <property type="match status" value="1"/>
</dbReference>
<dbReference type="Pfam" id="PF03950">
    <property type="entry name" value="tRNA-synt_1c_C"/>
    <property type="match status" value="1"/>
</dbReference>
<dbReference type="Pfam" id="PF20974">
    <property type="entry name" value="tRNA-synt_1c_C2"/>
    <property type="match status" value="1"/>
</dbReference>
<dbReference type="PRINTS" id="PR00987">
    <property type="entry name" value="TRNASYNTHGLU"/>
</dbReference>
<dbReference type="SUPFAM" id="SSF52374">
    <property type="entry name" value="Nucleotidylyl transferase"/>
    <property type="match status" value="1"/>
</dbReference>
<dbReference type="SUPFAM" id="SSF50715">
    <property type="entry name" value="Ribosomal protein L25-like"/>
    <property type="match status" value="1"/>
</dbReference>
<dbReference type="PROSITE" id="PS00178">
    <property type="entry name" value="AA_TRNA_LIGASE_I"/>
    <property type="match status" value="1"/>
</dbReference>
<reference key="1">
    <citation type="journal article" date="2010" name="BMC Genomics">
        <title>A genomic perspective on the potential of Actinobacillus succinogenes for industrial succinate production.</title>
        <authorList>
            <person name="McKinlay J.B."/>
            <person name="Laivenieks M."/>
            <person name="Schindler B.D."/>
            <person name="McKinlay A.A."/>
            <person name="Siddaramappa S."/>
            <person name="Challacombe J.F."/>
            <person name="Lowry S.R."/>
            <person name="Clum A."/>
            <person name="Lapidus A.L."/>
            <person name="Burkhart K.B."/>
            <person name="Harkins V."/>
            <person name="Vieille C."/>
        </authorList>
    </citation>
    <scope>NUCLEOTIDE SEQUENCE [LARGE SCALE GENOMIC DNA]</scope>
    <source>
        <strain>ATCC 55618 / DSM 22257 / CCUG 43843 / 130Z</strain>
    </source>
</reference>
<name>SYQ_ACTSZ</name>
<proteinExistence type="inferred from homology"/>